<proteinExistence type="uncertain"/>
<gene>
    <name evidence="3" type="ordered locus">YHL030W-A</name>
</gene>
<comment type="miscellaneous">
    <text evidence="1">Partially overlaps GOS1.</text>
</comment>
<comment type="caution">
    <text evidence="2">Product of a dubious gene prediction unlikely to encode a functional protein. Because of that it is not part of the S.cerevisiae S288c complete/reference proteome set.</text>
</comment>
<organism>
    <name type="scientific">Saccharomyces cerevisiae (strain ATCC 204508 / S288c)</name>
    <name type="common">Baker's yeast</name>
    <dbReference type="NCBI Taxonomy" id="559292"/>
    <lineage>
        <taxon>Eukaryota</taxon>
        <taxon>Fungi</taxon>
        <taxon>Dikarya</taxon>
        <taxon>Ascomycota</taxon>
        <taxon>Saccharomycotina</taxon>
        <taxon>Saccharomycetes</taxon>
        <taxon>Saccharomycetales</taxon>
        <taxon>Saccharomycetaceae</taxon>
        <taxon>Saccharomyces</taxon>
    </lineage>
</organism>
<name>YH030_YEAST</name>
<accession>A0A023PZD5</accession>
<dbReference type="EMBL" id="KJ412253">
    <property type="protein sequence ID" value="AHX39296.1"/>
    <property type="molecule type" value="Genomic_DNA"/>
</dbReference>
<dbReference type="PaxDb" id="4932-YHL030W-A"/>
<dbReference type="EnsemblFungi" id="YHL030W-A_mRNA">
    <property type="protein sequence ID" value="YHL030W-A"/>
    <property type="gene ID" value="YHL030W-A"/>
</dbReference>
<dbReference type="AGR" id="SGD:S000028773"/>
<dbReference type="SGD" id="S000028773">
    <property type="gene designation" value="YHL030W-A"/>
</dbReference>
<dbReference type="HOGENOM" id="CLU_1714740_0_0_1"/>
<feature type="chain" id="PRO_0000431018" description="Putative uncharacterized protein YHL030W-A">
    <location>
        <begin position="1"/>
        <end position="153"/>
    </location>
</feature>
<evidence type="ECO:0000305" key="1"/>
<evidence type="ECO:0000305" key="2">
    <source>
    </source>
</evidence>
<evidence type="ECO:0000312" key="3">
    <source>
        <dbReference type="SGD" id="S000028773"/>
    </source>
</evidence>
<reference key="1">
    <citation type="journal article" date="1994" name="Science">
        <title>Complete nucleotide sequence of Saccharomyces cerevisiae chromosome VIII.</title>
        <authorList>
            <person name="Johnston M."/>
            <person name="Andrews S."/>
            <person name="Brinkman R."/>
            <person name="Cooper J."/>
            <person name="Ding H."/>
            <person name="Dover J."/>
            <person name="Du Z."/>
            <person name="Favello A."/>
            <person name="Fulton L."/>
            <person name="Gattung S."/>
            <person name="Geisel C."/>
            <person name="Kirsten J."/>
            <person name="Kucaba T."/>
            <person name="Hillier L.W."/>
            <person name="Jier M."/>
            <person name="Johnston L."/>
            <person name="Langston Y."/>
            <person name="Latreille P."/>
            <person name="Louis E.J."/>
            <person name="Macri C."/>
            <person name="Mardis E."/>
            <person name="Menezes S."/>
            <person name="Mouser L."/>
            <person name="Nhan M."/>
            <person name="Rifkin L."/>
            <person name="Riles L."/>
            <person name="St Peter H."/>
            <person name="Trevaskis E."/>
            <person name="Vaughan K."/>
            <person name="Vignati D."/>
            <person name="Wilcox L."/>
            <person name="Wohldman P."/>
            <person name="Waterston R."/>
            <person name="Wilson R."/>
            <person name="Vaudin M."/>
        </authorList>
    </citation>
    <scope>NUCLEOTIDE SEQUENCE [LARGE SCALE GENOMIC DNA]</scope>
    <source>
        <strain>ATCC 204508 / S288c</strain>
    </source>
</reference>
<reference key="2">
    <citation type="journal article" date="2014" name="G3 (Bethesda)">
        <title>The reference genome sequence of Saccharomyces cerevisiae: Then and now.</title>
        <authorList>
            <person name="Engel S.R."/>
            <person name="Dietrich F.S."/>
            <person name="Fisk D.G."/>
            <person name="Binkley G."/>
            <person name="Balakrishnan R."/>
            <person name="Costanzo M.C."/>
            <person name="Dwight S.S."/>
            <person name="Hitz B.C."/>
            <person name="Karra K."/>
            <person name="Nash R.S."/>
            <person name="Weng S."/>
            <person name="Wong E.D."/>
            <person name="Lloyd P."/>
            <person name="Skrzypek M.S."/>
            <person name="Miyasato S.R."/>
            <person name="Simison M."/>
            <person name="Cherry J.M."/>
        </authorList>
    </citation>
    <scope>GENOME REANNOTATION</scope>
    <source>
        <strain>ATCC 204508 / S288c</strain>
    </source>
</reference>
<sequence>MYSSASPIGAGASVVELAISFFTLNNKFSLLRSCWMEDLILRKLFQWSCKISLWRCSWESFEAEIAGLESQICVNESITSCLWPKIPSNCLSIFFSWPVCSELVVCANVEYLERSDSVCVSREMALPLMVTKDGCELMWCGCLSGIGLFPVSS</sequence>
<protein>
    <recommendedName>
        <fullName evidence="1">Putative uncharacterized protein YHL030W-A</fullName>
    </recommendedName>
</protein>